<reference key="1">
    <citation type="journal article" date="2008" name="Nature">
        <title>The amphioxus genome and the evolution of the chordate karyotype.</title>
        <authorList>
            <person name="Putnam N.H."/>
            <person name="Butts T."/>
            <person name="Ferrier D.E.K."/>
            <person name="Furlong R.F."/>
            <person name="Hellsten U."/>
            <person name="Kawashima T."/>
            <person name="Robinson-Rechavi M."/>
            <person name="Shoguchi E."/>
            <person name="Terry A."/>
            <person name="Yu J.-K."/>
            <person name="Benito-Gutierrez E.L."/>
            <person name="Dubchak I."/>
            <person name="Garcia-Fernandez J."/>
            <person name="Gibson-Brown J.J."/>
            <person name="Grigoriev I.V."/>
            <person name="Horton A.C."/>
            <person name="de Jong P.J."/>
            <person name="Jurka J."/>
            <person name="Kapitonov V.V."/>
            <person name="Kohara Y."/>
            <person name="Kuroki Y."/>
            <person name="Lindquist E."/>
            <person name="Lucas S."/>
            <person name="Osoegawa K."/>
            <person name="Pennacchio L.A."/>
            <person name="Salamov A.A."/>
            <person name="Satou Y."/>
            <person name="Sauka-Spengler T."/>
            <person name="Schmutz J."/>
            <person name="Shin-I T."/>
            <person name="Toyoda A."/>
            <person name="Bronner-Fraser M."/>
            <person name="Fujiyama A."/>
            <person name="Holland L.Z."/>
            <person name="Holland P.W.H."/>
            <person name="Satoh N."/>
            <person name="Rokhsar D.S."/>
        </authorList>
    </citation>
    <scope>NUCLEOTIDE SEQUENCE [LARGE SCALE GENOMIC DNA]</scope>
    <source>
        <strain>S238N-H82</strain>
        <tissue>Testis</tissue>
    </source>
</reference>
<gene>
    <name type="ORF">BRAFLDRAFT_125969</name>
</gene>
<evidence type="ECO:0000255" key="1">
    <source>
        <dbReference type="HAMAP-Rule" id="MF_03123"/>
    </source>
</evidence>
<evidence type="ECO:0000255" key="2">
    <source>
        <dbReference type="PROSITE-ProRule" id="PRU01266"/>
    </source>
</evidence>
<accession>C3Y3G4</accession>
<organism>
    <name type="scientific">Branchiostoma floridae</name>
    <name type="common">Florida lancelet</name>
    <name type="synonym">Amphioxus</name>
    <dbReference type="NCBI Taxonomy" id="7739"/>
    <lineage>
        <taxon>Eukaryota</taxon>
        <taxon>Metazoa</taxon>
        <taxon>Chordata</taxon>
        <taxon>Cephalochordata</taxon>
        <taxon>Leptocardii</taxon>
        <taxon>Amphioxiformes</taxon>
        <taxon>Branchiostomatidae</taxon>
        <taxon>Branchiostoma</taxon>
    </lineage>
</organism>
<sequence length="376" mass="41818">MATCLLMSTFTFIRCSVLKWGSGSSLPQEQKEKITKGPGLGDFISGEVESTDSWEDYMGKLRLEKGDKRLRLPPWLKKEIPIGKNYHSLKGTLRELNLATVCEEAKCPNIGECWGGGEDKTATATIMVMGDTCTRGCRFCSVKTARSPPPLDPNEPVHTAEAISRWGVDYIVITSVDRDDVADGGSAHFSECVKEIKKRIPSMLVECLTPDFRGDMEAVATVAQSGLDVFAHNIETVKRLTPFVRDPRAKYDQSLQVLSHVKKTVPDMVTKSSIMLGLGETDQEVRTAMEDLRRAGVDCLTLGQYMQPTKRHLKVQEYVTPTKFKHWEEVGGEMGFAYTASGPLVRSSYRAGEFYIKNLLNKKRTEATLDTSSQES</sequence>
<keyword id="KW-0004">4Fe-4S</keyword>
<keyword id="KW-0408">Iron</keyword>
<keyword id="KW-0411">Iron-sulfur</keyword>
<keyword id="KW-0479">Metal-binding</keyword>
<keyword id="KW-0496">Mitochondrion</keyword>
<keyword id="KW-1185">Reference proteome</keyword>
<keyword id="KW-0949">S-adenosyl-L-methionine</keyword>
<keyword id="KW-0808">Transferase</keyword>
<dbReference type="EC" id="2.8.1.8" evidence="1"/>
<dbReference type="EMBL" id="GG666483">
    <property type="protein sequence ID" value="EEN65231.1"/>
    <property type="molecule type" value="Genomic_DNA"/>
</dbReference>
<dbReference type="RefSeq" id="XP_002609221.1">
    <property type="nucleotide sequence ID" value="XM_002609175.1"/>
</dbReference>
<dbReference type="SMR" id="C3Y3G4"/>
<dbReference type="STRING" id="7739.C3Y3G4"/>
<dbReference type="eggNOG" id="KOG2672">
    <property type="taxonomic scope" value="Eukaryota"/>
</dbReference>
<dbReference type="InParanoid" id="C3Y3G4"/>
<dbReference type="UniPathway" id="UPA00538">
    <property type="reaction ID" value="UER00593"/>
</dbReference>
<dbReference type="Proteomes" id="UP000001554">
    <property type="component" value="Unplaced"/>
</dbReference>
<dbReference type="GO" id="GO:0005739">
    <property type="term" value="C:mitochondrion"/>
    <property type="evidence" value="ECO:0000318"/>
    <property type="project" value="GO_Central"/>
</dbReference>
<dbReference type="GO" id="GO:0051539">
    <property type="term" value="F:4 iron, 4 sulfur cluster binding"/>
    <property type="evidence" value="ECO:0007669"/>
    <property type="project" value="UniProtKB-UniRule"/>
</dbReference>
<dbReference type="GO" id="GO:0016992">
    <property type="term" value="F:lipoate synthase activity"/>
    <property type="evidence" value="ECO:0000318"/>
    <property type="project" value="GO_Central"/>
</dbReference>
<dbReference type="GO" id="GO:0046872">
    <property type="term" value="F:metal ion binding"/>
    <property type="evidence" value="ECO:0007669"/>
    <property type="project" value="UniProtKB-KW"/>
</dbReference>
<dbReference type="GO" id="GO:0009107">
    <property type="term" value="P:lipoate biosynthetic process"/>
    <property type="evidence" value="ECO:0000318"/>
    <property type="project" value="GO_Central"/>
</dbReference>
<dbReference type="CDD" id="cd01335">
    <property type="entry name" value="Radical_SAM"/>
    <property type="match status" value="1"/>
</dbReference>
<dbReference type="FunFam" id="3.20.20.70:FF:000036">
    <property type="entry name" value="Lipoyl synthase, mitochondrial"/>
    <property type="match status" value="1"/>
</dbReference>
<dbReference type="Gene3D" id="3.20.20.70">
    <property type="entry name" value="Aldolase class I"/>
    <property type="match status" value="1"/>
</dbReference>
<dbReference type="HAMAP" id="MF_00206">
    <property type="entry name" value="Lipoyl_synth"/>
    <property type="match status" value="1"/>
</dbReference>
<dbReference type="InterPro" id="IPR013785">
    <property type="entry name" value="Aldolase_TIM"/>
</dbReference>
<dbReference type="InterPro" id="IPR006638">
    <property type="entry name" value="Elp3/MiaA/NifB-like_rSAM"/>
</dbReference>
<dbReference type="InterPro" id="IPR031691">
    <property type="entry name" value="LIAS_N"/>
</dbReference>
<dbReference type="InterPro" id="IPR003698">
    <property type="entry name" value="Lipoyl_synth"/>
</dbReference>
<dbReference type="InterPro" id="IPR007197">
    <property type="entry name" value="rSAM"/>
</dbReference>
<dbReference type="NCBIfam" id="TIGR00510">
    <property type="entry name" value="lipA"/>
    <property type="match status" value="1"/>
</dbReference>
<dbReference type="NCBIfam" id="NF004019">
    <property type="entry name" value="PRK05481.1"/>
    <property type="match status" value="1"/>
</dbReference>
<dbReference type="NCBIfam" id="NF009544">
    <property type="entry name" value="PRK12928.1"/>
    <property type="match status" value="1"/>
</dbReference>
<dbReference type="PANTHER" id="PTHR10949">
    <property type="entry name" value="LIPOYL SYNTHASE"/>
    <property type="match status" value="1"/>
</dbReference>
<dbReference type="PANTHER" id="PTHR10949:SF0">
    <property type="entry name" value="LIPOYL SYNTHASE, MITOCHONDRIAL"/>
    <property type="match status" value="1"/>
</dbReference>
<dbReference type="Pfam" id="PF16881">
    <property type="entry name" value="LIAS_N"/>
    <property type="match status" value="1"/>
</dbReference>
<dbReference type="Pfam" id="PF04055">
    <property type="entry name" value="Radical_SAM"/>
    <property type="match status" value="1"/>
</dbReference>
<dbReference type="PIRSF" id="PIRSF005963">
    <property type="entry name" value="Lipoyl_synth"/>
    <property type="match status" value="1"/>
</dbReference>
<dbReference type="SFLD" id="SFLDF00271">
    <property type="entry name" value="lipoyl_synthase"/>
    <property type="match status" value="1"/>
</dbReference>
<dbReference type="SFLD" id="SFLDG01058">
    <property type="entry name" value="lipoyl_synthase_like"/>
    <property type="match status" value="1"/>
</dbReference>
<dbReference type="SMART" id="SM00729">
    <property type="entry name" value="Elp3"/>
    <property type="match status" value="1"/>
</dbReference>
<dbReference type="SUPFAM" id="SSF102114">
    <property type="entry name" value="Radical SAM enzymes"/>
    <property type="match status" value="1"/>
</dbReference>
<dbReference type="PROSITE" id="PS51918">
    <property type="entry name" value="RADICAL_SAM"/>
    <property type="match status" value="1"/>
</dbReference>
<proteinExistence type="inferred from homology"/>
<comment type="function">
    <text evidence="1">Catalyzes the radical-mediated insertion of two sulfur atoms into the C-6 and C-8 positions of the octanoyl moiety bound to the lipoyl domains of lipoate-dependent enzymes, thereby converting the octanoylated domains into lipoylated derivatives.</text>
</comment>
<comment type="catalytic activity">
    <reaction evidence="1">
        <text>[[Fe-S] cluster scaffold protein carrying a second [4Fe-4S](2+) cluster] + N(6)-octanoyl-L-lysyl-[protein] + 2 oxidized [2Fe-2S]-[ferredoxin] + 2 S-adenosyl-L-methionine + 4 H(+) = [[Fe-S] cluster scaffold protein] + N(6)-[(R)-dihydrolipoyl]-L-lysyl-[protein] + 4 Fe(3+) + 2 hydrogen sulfide + 2 5'-deoxyadenosine + 2 L-methionine + 2 reduced [2Fe-2S]-[ferredoxin]</text>
        <dbReference type="Rhea" id="RHEA:16585"/>
        <dbReference type="Rhea" id="RHEA-COMP:9928"/>
        <dbReference type="Rhea" id="RHEA-COMP:10000"/>
        <dbReference type="Rhea" id="RHEA-COMP:10001"/>
        <dbReference type="Rhea" id="RHEA-COMP:10475"/>
        <dbReference type="Rhea" id="RHEA-COMP:14568"/>
        <dbReference type="Rhea" id="RHEA-COMP:14569"/>
        <dbReference type="ChEBI" id="CHEBI:15378"/>
        <dbReference type="ChEBI" id="CHEBI:17319"/>
        <dbReference type="ChEBI" id="CHEBI:29034"/>
        <dbReference type="ChEBI" id="CHEBI:29919"/>
        <dbReference type="ChEBI" id="CHEBI:33722"/>
        <dbReference type="ChEBI" id="CHEBI:33737"/>
        <dbReference type="ChEBI" id="CHEBI:33738"/>
        <dbReference type="ChEBI" id="CHEBI:57844"/>
        <dbReference type="ChEBI" id="CHEBI:59789"/>
        <dbReference type="ChEBI" id="CHEBI:78809"/>
        <dbReference type="ChEBI" id="CHEBI:83100"/>
        <dbReference type="EC" id="2.8.1.8"/>
    </reaction>
</comment>
<comment type="cofactor">
    <cofactor evidence="1">
        <name>[4Fe-4S] cluster</name>
        <dbReference type="ChEBI" id="CHEBI:49883"/>
    </cofactor>
    <text evidence="1">Binds 2 [4Fe-4S] clusters per subunit. One cluster is coordinated with 3 cysteines and an exchangeable S-adenosyl-L-methionine.</text>
</comment>
<comment type="pathway">
    <text evidence="1">Protein modification; protein lipoylation via endogenous pathway; protein N(6)-(lipoyl)lysine from octanoyl-[acyl-carrier-protein]: step 2/2.</text>
</comment>
<comment type="subcellular location">
    <subcellularLocation>
        <location evidence="1">Mitochondrion</location>
    </subcellularLocation>
</comment>
<comment type="miscellaneous">
    <text evidence="1">This protein may be expected to contain an N-terminal transit peptide but none has been predicted.</text>
</comment>
<comment type="similarity">
    <text evidence="1">Belongs to the radical SAM superfamily. Lipoyl synthase family.</text>
</comment>
<protein>
    <recommendedName>
        <fullName evidence="1">Lipoyl synthase, mitochondrial</fullName>
        <ecNumber evidence="1">2.8.1.8</ecNumber>
    </recommendedName>
    <alternativeName>
        <fullName evidence="1">Lipoate synthase</fullName>
        <shortName evidence="1">LS</shortName>
        <shortName evidence="1">Lip-syn</shortName>
    </alternativeName>
    <alternativeName>
        <fullName evidence="1">Lipoic acid synthase</fullName>
    </alternativeName>
</protein>
<name>LIAS_BRAFL</name>
<feature type="chain" id="PRO_0000398213" description="Lipoyl synthase, mitochondrial">
    <location>
        <begin position="1"/>
        <end position="376"/>
    </location>
</feature>
<feature type="domain" description="Radical SAM core" evidence="2">
    <location>
        <begin position="116"/>
        <end position="337"/>
    </location>
</feature>
<feature type="binding site" evidence="1">
    <location>
        <position position="102"/>
    </location>
    <ligand>
        <name>[4Fe-4S] cluster</name>
        <dbReference type="ChEBI" id="CHEBI:49883"/>
        <label>1</label>
    </ligand>
</feature>
<feature type="binding site" evidence="1">
    <location>
        <position position="107"/>
    </location>
    <ligand>
        <name>[4Fe-4S] cluster</name>
        <dbReference type="ChEBI" id="CHEBI:49883"/>
        <label>1</label>
    </ligand>
</feature>
<feature type="binding site" evidence="1">
    <location>
        <position position="113"/>
    </location>
    <ligand>
        <name>[4Fe-4S] cluster</name>
        <dbReference type="ChEBI" id="CHEBI:49883"/>
        <label>1</label>
    </ligand>
</feature>
<feature type="binding site" evidence="1">
    <location>
        <position position="133"/>
    </location>
    <ligand>
        <name>[4Fe-4S] cluster</name>
        <dbReference type="ChEBI" id="CHEBI:49883"/>
        <label>2</label>
        <note>4Fe-4S-S-AdoMet</note>
    </ligand>
</feature>
<feature type="binding site" evidence="1">
    <location>
        <position position="137"/>
    </location>
    <ligand>
        <name>[4Fe-4S] cluster</name>
        <dbReference type="ChEBI" id="CHEBI:49883"/>
        <label>2</label>
        <note>4Fe-4S-S-AdoMet</note>
    </ligand>
</feature>
<feature type="binding site" evidence="1">
    <location>
        <position position="140"/>
    </location>
    <ligand>
        <name>[4Fe-4S] cluster</name>
        <dbReference type="ChEBI" id="CHEBI:49883"/>
        <label>2</label>
        <note>4Fe-4S-S-AdoMet</note>
    </ligand>
</feature>
<feature type="binding site" evidence="1">
    <location>
        <position position="348"/>
    </location>
    <ligand>
        <name>[4Fe-4S] cluster</name>
        <dbReference type="ChEBI" id="CHEBI:49883"/>
        <label>1</label>
    </ligand>
</feature>